<evidence type="ECO:0000250" key="1">
    <source>
        <dbReference type="UniProtKB" id="O34974"/>
    </source>
</evidence>
<evidence type="ECO:0000250" key="2">
    <source>
        <dbReference type="UniProtKB" id="P54995"/>
    </source>
</evidence>
<evidence type="ECO:0000269" key="3">
    <source>
    </source>
</evidence>
<evidence type="ECO:0000269" key="4">
    <source>
    </source>
</evidence>
<evidence type="ECO:0000269" key="5">
    <source>
    </source>
</evidence>
<evidence type="ECO:0000303" key="6">
    <source>
    </source>
</evidence>
<evidence type="ECO:0000305" key="7"/>
<evidence type="ECO:0000305" key="8">
    <source>
    </source>
</evidence>
<organism>
    <name type="scientific">Rhodococcus erythropolis</name>
    <name type="common">Arthrobacter picolinophilus</name>
    <dbReference type="NCBI Taxonomy" id="1833"/>
    <lineage>
        <taxon>Bacteria</taxon>
        <taxon>Bacillati</taxon>
        <taxon>Actinomycetota</taxon>
        <taxon>Actinomycetes</taxon>
        <taxon>Mycobacteriales</taxon>
        <taxon>Nocardiaceae</taxon>
        <taxon>Rhodococcus</taxon>
        <taxon>Rhodococcus erythropolis group</taxon>
    </lineage>
</organism>
<gene>
    <name evidence="6" type="primary">dszA</name>
</gene>
<sequence length="453" mass="49612">MTQQRQMDLAGFFSAGNVTHAHGAWRHTDASNDFLSGKYYQHIARTLERGKFDLLFLPDGLAVEDSYGDNLDTGVGLGGQGAVALEPASVVATMAAVTEHLGLGATISATYYPPYHVARVFATLDQLSGGRVSWNVVTSLNDAEARNFGINQHLEHDARYDRADEFLEAVKKLWNSWDEDALVLDKAAGVFADPAKVHYVDHHGEWLNVRGPLQVPRSPQGEPVILQAGLSPRGRRFAGKWAEAVFSLAPNLEVMQATYQGIKAEVDAAGRDPDQTKIFTAVMPVLGESQAVAQERLEYLNSLVHPEVGLSTLSSHTGINLAAYPLDTPIKDILRDLQDRNVPTQLHMFAAATHSEELTLAEMGRRYGTNVGFVPQWAGTGEQIADELIRHFEGGAADGFIISPAFLPGSYDEFVDQVVPVLQDRGYFRTEYQGNTLRDHLGLRVPQLQGQPS</sequence>
<reference key="1">
    <citation type="journal article" date="2006" name="Biotechnol. Lett.">
        <title>Desulfurization of dibenzothiophene by Bacillus subtilis recombinants carrying dszABC and dszD genes.</title>
        <authorList>
            <person name="Ma T."/>
            <person name="Li G."/>
            <person name="Li J."/>
            <person name="Liang F."/>
            <person name="Liu R."/>
        </authorList>
    </citation>
    <scope>NUCLEOTIDE SEQUENCE [GENOMIC DNA]</scope>
    <scope>PROBABLE FUNCTION</scope>
    <scope>PATHWAY</scope>
    <scope>EXPRESSION IN B.SUBTILIS</scope>
    <scope>INDUCTION</scope>
    <scope>BIOTECHNOLOGY</scope>
    <source>
        <strain>DS-3</strain>
    </source>
</reference>
<reference key="2">
    <citation type="journal article" date="2007" name="Biosci. Biotechnol. Biochem.">
        <title>Improvement of dibenzothiophene desulfurization activity by removing the gene overlap in the dsz operon.</title>
        <authorList>
            <person name="Li G.Q."/>
            <person name="Ma T."/>
            <person name="Li S.S."/>
            <person name="Li H."/>
            <person name="Liang F.L."/>
            <person name="Liu R.L."/>
        </authorList>
    </citation>
    <scope>INDUCTION</scope>
    <scope>BIOTECHNOLOGY</scope>
    <source>
        <strain>DS-3</strain>
    </source>
</reference>
<reference key="3">
    <citation type="journal article" date="2008" name="Appl. Environ. Microbiol.">
        <title>Genetic rearrangement strategy for optimizing the dibenzothiophene biodesulfurization pathway in Rhodococcus erythropolis.</title>
        <authorList>
            <person name="Li G.Q."/>
            <person name="Li S.S."/>
            <person name="Zhang M.L."/>
            <person name="Wang J."/>
            <person name="Zhu L."/>
            <person name="Liang F.L."/>
            <person name="Liu R.L."/>
            <person name="Ma T."/>
        </authorList>
    </citation>
    <scope>BIOTECHNOLOGY</scope>
    <source>
        <strain>DS-3</strain>
    </source>
</reference>
<comment type="function">
    <text evidence="2 8">Catalyzes the second step of the '4S' desulfurization pathway that removes covalently bound sulfur from dibenzothiophene (DBT) without breaking carbon-carbon bonds. Metabolizes DBT-sulfone (DBTO2 or DBT 5,5-dioxide) to 2-(2'-hydroxyphenyl)benzene sulphinate (HBPS).</text>
</comment>
<comment type="catalytic activity">
    <reaction evidence="2 8">
        <text>dibenzothiophene 5,5-dioxide + FMNH2 + NADH + O2 = 2'-hydroxybiphenyl-2-sulfinate + FMN + NAD(+) + H2O + H(+)</text>
        <dbReference type="Rhea" id="RHEA:12312"/>
        <dbReference type="ChEBI" id="CHEBI:15377"/>
        <dbReference type="ChEBI" id="CHEBI:15378"/>
        <dbReference type="ChEBI" id="CHEBI:15379"/>
        <dbReference type="ChEBI" id="CHEBI:18218"/>
        <dbReference type="ChEBI" id="CHEBI:57540"/>
        <dbReference type="ChEBI" id="CHEBI:57618"/>
        <dbReference type="ChEBI" id="CHEBI:57945"/>
        <dbReference type="ChEBI" id="CHEBI:58210"/>
        <dbReference type="ChEBI" id="CHEBI:90356"/>
        <dbReference type="EC" id="1.14.14.22"/>
    </reaction>
</comment>
<comment type="pathway">
    <text evidence="3">Sulfur metabolism; dibenzothiophene degradation.</text>
</comment>
<comment type="subunit">
    <text evidence="2">Homodimer.</text>
</comment>
<comment type="subcellular location">
    <subcellularLocation>
        <location evidence="7">Cytoplasm</location>
    </subcellularLocation>
</comment>
<comment type="induction">
    <text evidence="4 8">Repressed by HBP or sulfate (Probable). Part of the dszA-dszB-dszC operon. This protein is expressed at high levels (at protein level) (PubMed:17420595).</text>
</comment>
<comment type="biotechnology">
    <text evidence="3 4 5">Expression in B.subtilis confers the ability to remove sulfur from polycyclic aromatic sulfur compounds found in gasoline and diesel (biodesulfurization), which are a considerable source of pollution (PubMed:16810451). Modification of the operon so the start codon of dszB no longer overlaps with the stop codon of dszA leads to increased expression of DszB (in R.erythropolis) and about 5-fold higher levels of desulfurization of DBT (PubMed:17420595). Rearrangement of the operon into the order dszB-dszC-dszA leads to 12-fold higher levels of DBT desulfurization (PubMed:18165370).</text>
</comment>
<comment type="miscellaneous">
    <text evidence="2">Reduced flavin is provided by flavin reductase DszD.</text>
</comment>
<comment type="similarity">
    <text evidence="7">Belongs to the NtaA/SnaA/DszA monooxygenase family.</text>
</comment>
<protein>
    <recommendedName>
        <fullName>Dibenzothiophene-sulfone monooxygenase</fullName>
        <shortName>DBTO2 monooxygenase</shortName>
        <shortName>DBTO2-MO</shortName>
        <ecNumber evidence="2 8">1.14.14.22</ecNumber>
    </recommendedName>
</protein>
<name>DSZA_RHOER</name>
<dbReference type="EC" id="1.14.14.22" evidence="2 8"/>
<dbReference type="EMBL" id="DQ444325">
    <property type="protein sequence ID" value="ABE26644.1"/>
    <property type="molecule type" value="Genomic_DNA"/>
</dbReference>
<dbReference type="SMR" id="Q0ZIH7"/>
<dbReference type="UniPathway" id="UPA00346"/>
<dbReference type="GO" id="GO:0005737">
    <property type="term" value="C:cytoplasm"/>
    <property type="evidence" value="ECO:0007669"/>
    <property type="project" value="UniProtKB-SubCell"/>
</dbReference>
<dbReference type="GO" id="GO:0004497">
    <property type="term" value="F:monooxygenase activity"/>
    <property type="evidence" value="ECO:0007669"/>
    <property type="project" value="UniProtKB-KW"/>
</dbReference>
<dbReference type="GO" id="GO:0000166">
    <property type="term" value="F:nucleotide binding"/>
    <property type="evidence" value="ECO:0007669"/>
    <property type="project" value="UniProtKB-KW"/>
</dbReference>
<dbReference type="GO" id="GO:0016705">
    <property type="term" value="F:oxidoreductase activity, acting on paired donors, with incorporation or reduction of molecular oxygen"/>
    <property type="evidence" value="ECO:0007669"/>
    <property type="project" value="InterPro"/>
</dbReference>
<dbReference type="GO" id="GO:0018896">
    <property type="term" value="P:dibenzothiophene catabolic process"/>
    <property type="evidence" value="ECO:0007669"/>
    <property type="project" value="UniProtKB-UniPathway"/>
</dbReference>
<dbReference type="CDD" id="cd01095">
    <property type="entry name" value="Nitrilotriacetate_monoxgenase"/>
    <property type="match status" value="1"/>
</dbReference>
<dbReference type="Gene3D" id="3.20.20.30">
    <property type="entry name" value="Luciferase-like domain"/>
    <property type="match status" value="1"/>
</dbReference>
<dbReference type="InterPro" id="IPR051260">
    <property type="entry name" value="Diverse_substr_monoxygenases"/>
</dbReference>
<dbReference type="InterPro" id="IPR011251">
    <property type="entry name" value="Luciferase-like_dom"/>
</dbReference>
<dbReference type="InterPro" id="IPR036661">
    <property type="entry name" value="Luciferase-like_sf"/>
</dbReference>
<dbReference type="InterPro" id="IPR016215">
    <property type="entry name" value="NTA_MOA"/>
</dbReference>
<dbReference type="NCBIfam" id="TIGR03860">
    <property type="entry name" value="FMN_nitrolo"/>
    <property type="match status" value="1"/>
</dbReference>
<dbReference type="PANTHER" id="PTHR30011">
    <property type="entry name" value="ALKANESULFONATE MONOOXYGENASE-RELATED"/>
    <property type="match status" value="1"/>
</dbReference>
<dbReference type="PANTHER" id="PTHR30011:SF16">
    <property type="entry name" value="C2H2 FINGER DOMAIN TRANSCRIPTION FACTOR (EUROFUNG)-RELATED"/>
    <property type="match status" value="1"/>
</dbReference>
<dbReference type="Pfam" id="PF00296">
    <property type="entry name" value="Bac_luciferase"/>
    <property type="match status" value="1"/>
</dbReference>
<dbReference type="PIRSF" id="PIRSF000337">
    <property type="entry name" value="NTA_MOA"/>
    <property type="match status" value="1"/>
</dbReference>
<dbReference type="SUPFAM" id="SSF51679">
    <property type="entry name" value="Bacterial luciferase-like"/>
    <property type="match status" value="1"/>
</dbReference>
<proteinExistence type="evidence at protein level"/>
<accession>Q0ZIH7</accession>
<keyword id="KW-0963">Cytoplasm</keyword>
<keyword id="KW-0285">Flavoprotein</keyword>
<keyword id="KW-0288">FMN</keyword>
<keyword id="KW-0503">Monooxygenase</keyword>
<keyword id="KW-0547">Nucleotide-binding</keyword>
<keyword id="KW-0560">Oxidoreductase</keyword>
<feature type="chain" id="PRO_0000455392" description="Dibenzothiophene-sulfone monooxygenase">
    <location>
        <begin position="1"/>
        <end position="453"/>
    </location>
</feature>
<feature type="binding site" evidence="1">
    <location>
        <position position="59"/>
    </location>
    <ligand>
        <name>FMN</name>
        <dbReference type="ChEBI" id="CHEBI:58210"/>
    </ligand>
</feature>
<feature type="binding site" evidence="1">
    <location>
        <position position="106"/>
    </location>
    <ligand>
        <name>FMN</name>
        <dbReference type="ChEBI" id="CHEBI:58210"/>
    </ligand>
</feature>
<feature type="binding site" evidence="1">
    <location>
        <position position="156"/>
    </location>
    <ligand>
        <name>FMN</name>
        <dbReference type="ChEBI" id="CHEBI:58210"/>
    </ligand>
</feature>
<feature type="binding site" evidence="1">
    <location>
        <position position="160"/>
    </location>
    <ligand>
        <name>FMN</name>
        <dbReference type="ChEBI" id="CHEBI:58210"/>
    </ligand>
</feature>
<feature type="binding site" evidence="1">
    <location>
        <position position="231"/>
    </location>
    <ligand>
        <name>FMN</name>
        <dbReference type="ChEBI" id="CHEBI:58210"/>
    </ligand>
</feature>